<protein>
    <recommendedName>
        <fullName>Calcium/calmodulin-dependent protein kinase type I</fullName>
        <shortName>CaMK-I</shortName>
        <ecNumber>2.7.11.17</ecNumber>
    </recommendedName>
</protein>
<accession>Q9P7I2</accession>
<accession>O74235</accession>
<feature type="chain" id="PRO_0000086089" description="Calcium/calmodulin-dependent protein kinase type I">
    <location>
        <begin position="1"/>
        <end position="335"/>
    </location>
</feature>
<feature type="domain" description="Protein kinase" evidence="2">
    <location>
        <begin position="31"/>
        <end position="291"/>
    </location>
</feature>
<feature type="region of interest" description="Calmodulin-binding" evidence="1">
    <location>
        <begin position="310"/>
        <end position="334"/>
    </location>
</feature>
<feature type="active site" description="Proton acceptor" evidence="2 3">
    <location>
        <position position="154"/>
    </location>
</feature>
<feature type="binding site" evidence="2">
    <location>
        <begin position="37"/>
        <end position="45"/>
    </location>
    <ligand>
        <name>ATP</name>
        <dbReference type="ChEBI" id="CHEBI:30616"/>
    </ligand>
</feature>
<feature type="modified residue" description="Phosphothreonine; by autocatalysis" evidence="4">
    <location>
        <position position="192"/>
    </location>
</feature>
<feature type="mutagenesis site" description="15-fold increase in activity." evidence="4">
    <original>T</original>
    <variation>D</variation>
    <location>
        <position position="192"/>
    </location>
</feature>
<feature type="sequence conflict" description="In Ref. 1; AAC26005." evidence="5" ref="1">
    <original>E</original>
    <variation>A</variation>
    <location>
        <position position="115"/>
    </location>
</feature>
<feature type="sequence conflict" description="In Ref. 1; AAC26005." evidence="5" ref="1">
    <original>KR</original>
    <variation>NG</variation>
    <location>
        <begin position="294"/>
        <end position="295"/>
    </location>
</feature>
<comment type="function">
    <text>Important in cell cycle regulation.</text>
</comment>
<comment type="catalytic activity">
    <reaction>
        <text>L-seryl-[protein] + ATP = O-phospho-L-seryl-[protein] + ADP + H(+)</text>
        <dbReference type="Rhea" id="RHEA:17989"/>
        <dbReference type="Rhea" id="RHEA-COMP:9863"/>
        <dbReference type="Rhea" id="RHEA-COMP:11604"/>
        <dbReference type="ChEBI" id="CHEBI:15378"/>
        <dbReference type="ChEBI" id="CHEBI:29999"/>
        <dbReference type="ChEBI" id="CHEBI:30616"/>
        <dbReference type="ChEBI" id="CHEBI:83421"/>
        <dbReference type="ChEBI" id="CHEBI:456216"/>
        <dbReference type="EC" id="2.7.11.17"/>
    </reaction>
</comment>
<comment type="catalytic activity">
    <reaction>
        <text>L-threonyl-[protein] + ATP = O-phospho-L-threonyl-[protein] + ADP + H(+)</text>
        <dbReference type="Rhea" id="RHEA:46608"/>
        <dbReference type="Rhea" id="RHEA-COMP:11060"/>
        <dbReference type="Rhea" id="RHEA-COMP:11605"/>
        <dbReference type="ChEBI" id="CHEBI:15378"/>
        <dbReference type="ChEBI" id="CHEBI:30013"/>
        <dbReference type="ChEBI" id="CHEBI:30616"/>
        <dbReference type="ChEBI" id="CHEBI:61977"/>
        <dbReference type="ChEBI" id="CHEBI:456216"/>
        <dbReference type="EC" id="2.7.11.17"/>
    </reaction>
</comment>
<comment type="subcellular location">
    <subcellularLocation>
        <location evidence="4">Cytoplasm</location>
    </subcellularLocation>
</comment>
<comment type="similarity">
    <text evidence="5">Belongs to the protein kinase superfamily. CAMK Ser/Thr protein kinase family. CaMK subfamily.</text>
</comment>
<gene>
    <name type="primary">cmk1</name>
    <name type="ORF">SPAC25D11.02c</name>
    <name type="ORF">SPACUNK12.02c</name>
</gene>
<reference key="1">
    <citation type="journal article" date="2000" name="J. Biol. Chem.">
        <title>Cloning of a calmodulin kinase I homologue from Schizosaccharomyces pombe.</title>
        <authorList>
            <person name="Rasmussen C.D."/>
        </authorList>
    </citation>
    <scope>NUCLEOTIDE SEQUENCE [MRNA]</scope>
    <scope>SUBCELLULAR LOCATION</scope>
    <scope>PHOSPHORYLATION AT THR-192</scope>
    <scope>MUTAGENESIS OF THR-192</scope>
</reference>
<reference key="2">
    <citation type="journal article" date="2002" name="Nature">
        <title>The genome sequence of Schizosaccharomyces pombe.</title>
        <authorList>
            <person name="Wood V."/>
            <person name="Gwilliam R."/>
            <person name="Rajandream M.A."/>
            <person name="Lyne M.H."/>
            <person name="Lyne R."/>
            <person name="Stewart A."/>
            <person name="Sgouros J.G."/>
            <person name="Peat N."/>
            <person name="Hayles J."/>
            <person name="Baker S.G."/>
            <person name="Basham D."/>
            <person name="Bowman S."/>
            <person name="Brooks K."/>
            <person name="Brown D."/>
            <person name="Brown S."/>
            <person name="Chillingworth T."/>
            <person name="Churcher C.M."/>
            <person name="Collins M."/>
            <person name="Connor R."/>
            <person name="Cronin A."/>
            <person name="Davis P."/>
            <person name="Feltwell T."/>
            <person name="Fraser A."/>
            <person name="Gentles S."/>
            <person name="Goble A."/>
            <person name="Hamlin N."/>
            <person name="Harris D.E."/>
            <person name="Hidalgo J."/>
            <person name="Hodgson G."/>
            <person name="Holroyd S."/>
            <person name="Hornsby T."/>
            <person name="Howarth S."/>
            <person name="Huckle E.J."/>
            <person name="Hunt S."/>
            <person name="Jagels K."/>
            <person name="James K.D."/>
            <person name="Jones L."/>
            <person name="Jones M."/>
            <person name="Leather S."/>
            <person name="McDonald S."/>
            <person name="McLean J."/>
            <person name="Mooney P."/>
            <person name="Moule S."/>
            <person name="Mungall K.L."/>
            <person name="Murphy L.D."/>
            <person name="Niblett D."/>
            <person name="Odell C."/>
            <person name="Oliver K."/>
            <person name="O'Neil S."/>
            <person name="Pearson D."/>
            <person name="Quail M.A."/>
            <person name="Rabbinowitsch E."/>
            <person name="Rutherford K.M."/>
            <person name="Rutter S."/>
            <person name="Saunders D."/>
            <person name="Seeger K."/>
            <person name="Sharp S."/>
            <person name="Skelton J."/>
            <person name="Simmonds M.N."/>
            <person name="Squares R."/>
            <person name="Squares S."/>
            <person name="Stevens K."/>
            <person name="Taylor K."/>
            <person name="Taylor R.G."/>
            <person name="Tivey A."/>
            <person name="Walsh S.V."/>
            <person name="Warren T."/>
            <person name="Whitehead S."/>
            <person name="Woodward J.R."/>
            <person name="Volckaert G."/>
            <person name="Aert R."/>
            <person name="Robben J."/>
            <person name="Grymonprez B."/>
            <person name="Weltjens I."/>
            <person name="Vanstreels E."/>
            <person name="Rieger M."/>
            <person name="Schaefer M."/>
            <person name="Mueller-Auer S."/>
            <person name="Gabel C."/>
            <person name="Fuchs M."/>
            <person name="Duesterhoeft A."/>
            <person name="Fritzc C."/>
            <person name="Holzer E."/>
            <person name="Moestl D."/>
            <person name="Hilbert H."/>
            <person name="Borzym K."/>
            <person name="Langer I."/>
            <person name="Beck A."/>
            <person name="Lehrach H."/>
            <person name="Reinhardt R."/>
            <person name="Pohl T.M."/>
            <person name="Eger P."/>
            <person name="Zimmermann W."/>
            <person name="Wedler H."/>
            <person name="Wambutt R."/>
            <person name="Purnelle B."/>
            <person name="Goffeau A."/>
            <person name="Cadieu E."/>
            <person name="Dreano S."/>
            <person name="Gloux S."/>
            <person name="Lelaure V."/>
            <person name="Mottier S."/>
            <person name="Galibert F."/>
            <person name="Aves S.J."/>
            <person name="Xiang Z."/>
            <person name="Hunt C."/>
            <person name="Moore K."/>
            <person name="Hurst S.M."/>
            <person name="Lucas M."/>
            <person name="Rochet M."/>
            <person name="Gaillardin C."/>
            <person name="Tallada V.A."/>
            <person name="Garzon A."/>
            <person name="Thode G."/>
            <person name="Daga R.R."/>
            <person name="Cruzado L."/>
            <person name="Jimenez J."/>
            <person name="Sanchez M."/>
            <person name="del Rey F."/>
            <person name="Benito J."/>
            <person name="Dominguez A."/>
            <person name="Revuelta J.L."/>
            <person name="Moreno S."/>
            <person name="Armstrong J."/>
            <person name="Forsburg S.L."/>
            <person name="Cerutti L."/>
            <person name="Lowe T."/>
            <person name="McCombie W.R."/>
            <person name="Paulsen I."/>
            <person name="Potashkin J."/>
            <person name="Shpakovski G.V."/>
            <person name="Ussery D."/>
            <person name="Barrell B.G."/>
            <person name="Nurse P."/>
        </authorList>
    </citation>
    <scope>NUCLEOTIDE SEQUENCE [LARGE SCALE GENOMIC DNA]</scope>
    <source>
        <strain>972 / ATCC 24843</strain>
    </source>
</reference>
<organism>
    <name type="scientific">Schizosaccharomyces pombe (strain 972 / ATCC 24843)</name>
    <name type="common">Fission yeast</name>
    <dbReference type="NCBI Taxonomy" id="284812"/>
    <lineage>
        <taxon>Eukaryota</taxon>
        <taxon>Fungi</taxon>
        <taxon>Dikarya</taxon>
        <taxon>Ascomycota</taxon>
        <taxon>Taphrinomycotina</taxon>
        <taxon>Schizosaccharomycetes</taxon>
        <taxon>Schizosaccharomycetales</taxon>
        <taxon>Schizosaccharomycetaceae</taxon>
        <taxon>Schizosaccharomyces</taxon>
    </lineage>
</organism>
<dbReference type="EC" id="2.7.11.17"/>
<dbReference type="EMBL" id="AF073893">
    <property type="protein sequence ID" value="AAC26005.1"/>
    <property type="molecule type" value="mRNA"/>
</dbReference>
<dbReference type="EMBL" id="CU329670">
    <property type="protein sequence ID" value="CAB76233.1"/>
    <property type="molecule type" value="Genomic_DNA"/>
</dbReference>
<dbReference type="PIR" id="T50290">
    <property type="entry name" value="T50290"/>
</dbReference>
<dbReference type="RefSeq" id="NP_593464.1">
    <property type="nucleotide sequence ID" value="NM_001018897.2"/>
</dbReference>
<dbReference type="SMR" id="Q9P7I2"/>
<dbReference type="BioGRID" id="278904">
    <property type="interactions" value="27"/>
</dbReference>
<dbReference type="FunCoup" id="Q9P7I2">
    <property type="interactions" value="264"/>
</dbReference>
<dbReference type="IntAct" id="Q9P7I2">
    <property type="interactions" value="2"/>
</dbReference>
<dbReference type="STRING" id="284812.Q9P7I2"/>
<dbReference type="iPTMnet" id="Q9P7I2"/>
<dbReference type="SwissPalm" id="Q9P7I2"/>
<dbReference type="PaxDb" id="4896-SPACUNK12.02c.1"/>
<dbReference type="EnsemblFungi" id="SPACUNK12.02c.1">
    <property type="protein sequence ID" value="SPACUNK12.02c.1:pep"/>
    <property type="gene ID" value="SPACUNK12.02c"/>
</dbReference>
<dbReference type="GeneID" id="2542442"/>
<dbReference type="KEGG" id="spo:2542442"/>
<dbReference type="PomBase" id="SPACUNK12.02c">
    <property type="gene designation" value="cmk1"/>
</dbReference>
<dbReference type="VEuPathDB" id="FungiDB:SPACUNK12.02c"/>
<dbReference type="eggNOG" id="KOG0032">
    <property type="taxonomic scope" value="Eukaryota"/>
</dbReference>
<dbReference type="HOGENOM" id="CLU_000288_63_0_1"/>
<dbReference type="InParanoid" id="Q9P7I2"/>
<dbReference type="OMA" id="RPKVQPC"/>
<dbReference type="PhylomeDB" id="Q9P7I2"/>
<dbReference type="BRENDA" id="2.7.11.17">
    <property type="organism ID" value="5613"/>
</dbReference>
<dbReference type="PRO" id="PR:Q9P7I2"/>
<dbReference type="Proteomes" id="UP000002485">
    <property type="component" value="Chromosome I"/>
</dbReference>
<dbReference type="GO" id="GO:0005737">
    <property type="term" value="C:cytoplasm"/>
    <property type="evidence" value="ECO:0000318"/>
    <property type="project" value="GO_Central"/>
</dbReference>
<dbReference type="GO" id="GO:0005829">
    <property type="term" value="C:cytosol"/>
    <property type="evidence" value="ECO:0007005"/>
    <property type="project" value="PomBase"/>
</dbReference>
<dbReference type="GO" id="GO:0005634">
    <property type="term" value="C:nucleus"/>
    <property type="evidence" value="ECO:0007005"/>
    <property type="project" value="PomBase"/>
</dbReference>
<dbReference type="GO" id="GO:0005524">
    <property type="term" value="F:ATP binding"/>
    <property type="evidence" value="ECO:0000255"/>
    <property type="project" value="PomBase"/>
</dbReference>
<dbReference type="GO" id="GO:0004683">
    <property type="term" value="F:calcium/calmodulin-dependent protein kinase activity"/>
    <property type="evidence" value="ECO:0000314"/>
    <property type="project" value="PomBase"/>
</dbReference>
<dbReference type="GO" id="GO:0005516">
    <property type="term" value="F:calmodulin binding"/>
    <property type="evidence" value="ECO:0000314"/>
    <property type="project" value="PomBase"/>
</dbReference>
<dbReference type="GO" id="GO:0004672">
    <property type="term" value="F:protein kinase activity"/>
    <property type="evidence" value="ECO:0000315"/>
    <property type="project" value="PomBase"/>
</dbReference>
<dbReference type="GO" id="GO:0106310">
    <property type="term" value="F:protein serine kinase activity"/>
    <property type="evidence" value="ECO:0007669"/>
    <property type="project" value="RHEA"/>
</dbReference>
<dbReference type="GO" id="GO:0071277">
    <property type="term" value="P:cellular response to calcium ion"/>
    <property type="evidence" value="ECO:0000315"/>
    <property type="project" value="PomBase"/>
</dbReference>
<dbReference type="GO" id="GO:0034599">
    <property type="term" value="P:cellular response to oxidative stress"/>
    <property type="evidence" value="ECO:0000318"/>
    <property type="project" value="GO_Central"/>
</dbReference>
<dbReference type="GO" id="GO:0106057">
    <property type="term" value="P:negative regulation of calcineurin-mediated signaling"/>
    <property type="evidence" value="ECO:0000316"/>
    <property type="project" value="PomBase"/>
</dbReference>
<dbReference type="GO" id="GO:0010972">
    <property type="term" value="P:negative regulation of G2/M transition of mitotic cell cycle"/>
    <property type="evidence" value="ECO:0000316"/>
    <property type="project" value="PomBase"/>
</dbReference>
<dbReference type="GO" id="GO:0000122">
    <property type="term" value="P:negative regulation of transcription by RNA polymerase II"/>
    <property type="evidence" value="ECO:0000315"/>
    <property type="project" value="PomBase"/>
</dbReference>
<dbReference type="GO" id="GO:0010621">
    <property type="term" value="P:negative regulation of transcription by transcription factor localization"/>
    <property type="evidence" value="ECO:0000315"/>
    <property type="project" value="PomBase"/>
</dbReference>
<dbReference type="GO" id="GO:0007165">
    <property type="term" value="P:signal transduction"/>
    <property type="evidence" value="ECO:0000318"/>
    <property type="project" value="GO_Central"/>
</dbReference>
<dbReference type="CDD" id="cd05117">
    <property type="entry name" value="STKc_CAMK"/>
    <property type="match status" value="1"/>
</dbReference>
<dbReference type="FunFam" id="3.30.200.20:FF:000042">
    <property type="entry name" value="Aurora kinase A"/>
    <property type="match status" value="1"/>
</dbReference>
<dbReference type="FunFam" id="1.10.510.10:FF:000449">
    <property type="entry name" value="Calcium/calmodulin-dependent protein kinase"/>
    <property type="match status" value="1"/>
</dbReference>
<dbReference type="Gene3D" id="3.30.200.20">
    <property type="entry name" value="Phosphorylase Kinase, domain 1"/>
    <property type="match status" value="1"/>
</dbReference>
<dbReference type="Gene3D" id="1.10.510.10">
    <property type="entry name" value="Transferase(Phosphotransferase) domain 1"/>
    <property type="match status" value="1"/>
</dbReference>
<dbReference type="InterPro" id="IPR011009">
    <property type="entry name" value="Kinase-like_dom_sf"/>
</dbReference>
<dbReference type="InterPro" id="IPR000719">
    <property type="entry name" value="Prot_kinase_dom"/>
</dbReference>
<dbReference type="InterPro" id="IPR017441">
    <property type="entry name" value="Protein_kinase_ATP_BS"/>
</dbReference>
<dbReference type="InterPro" id="IPR008271">
    <property type="entry name" value="Ser/Thr_kinase_AS"/>
</dbReference>
<dbReference type="PANTHER" id="PTHR24347">
    <property type="entry name" value="SERINE/THREONINE-PROTEIN KINASE"/>
    <property type="match status" value="1"/>
</dbReference>
<dbReference type="Pfam" id="PF00069">
    <property type="entry name" value="Pkinase"/>
    <property type="match status" value="1"/>
</dbReference>
<dbReference type="SMART" id="SM00220">
    <property type="entry name" value="S_TKc"/>
    <property type="match status" value="1"/>
</dbReference>
<dbReference type="SUPFAM" id="SSF56112">
    <property type="entry name" value="Protein kinase-like (PK-like)"/>
    <property type="match status" value="1"/>
</dbReference>
<dbReference type="PROSITE" id="PS00107">
    <property type="entry name" value="PROTEIN_KINASE_ATP"/>
    <property type="match status" value="1"/>
</dbReference>
<dbReference type="PROSITE" id="PS50011">
    <property type="entry name" value="PROTEIN_KINASE_DOM"/>
    <property type="match status" value="1"/>
</dbReference>
<dbReference type="PROSITE" id="PS00108">
    <property type="entry name" value="PROTEIN_KINASE_ST"/>
    <property type="match status" value="1"/>
</dbReference>
<name>KCC1_SCHPO</name>
<keyword id="KW-0067">ATP-binding</keyword>
<keyword id="KW-0112">Calmodulin-binding</keyword>
<keyword id="KW-0963">Cytoplasm</keyword>
<keyword id="KW-0418">Kinase</keyword>
<keyword id="KW-0547">Nucleotide-binding</keyword>
<keyword id="KW-0597">Phosphoprotein</keyword>
<keyword id="KW-1185">Reference proteome</keyword>
<keyword id="KW-0723">Serine/threonine-protein kinase</keyword>
<keyword id="KW-0808">Transferase</keyword>
<evidence type="ECO:0000255" key="1"/>
<evidence type="ECO:0000255" key="2">
    <source>
        <dbReference type="PROSITE-ProRule" id="PRU00159"/>
    </source>
</evidence>
<evidence type="ECO:0000255" key="3">
    <source>
        <dbReference type="PROSITE-ProRule" id="PRU10027"/>
    </source>
</evidence>
<evidence type="ECO:0000269" key="4">
    <source>
    </source>
</evidence>
<evidence type="ECO:0000305" key="5"/>
<sequence length="335" mass="38164">MQQTYKPNTSALKDGAPKATVDQKQLLPCKYRVGRVLGGGTYATVREAVHIETNKMYAAKIMNKKMMEKKQDFVKNEIAILKRVSYEHPNILHLVDFFETVNNLYLITELATGGELFDRICAKGSFYEADAAALMRTTTSAVKYLHDNGIVHRDLKPENLLYRSKDPNSDLLIADFGLSHFYEDSQYYMLMTACGTPEYMAPEVFRRTGYGKPVDMWAIGVITYFLLSGYTPFARPSQVEVIEAILANEYTFNDPCWSGISETAKDFIKKCLENDPSKRLTAADALKHPFLSEKRPATSNLLPNVRENFNARKTFRTAYNAVRAFNTWKKLENKH</sequence>
<proteinExistence type="evidence at protein level"/>